<accession>Q96NX5</accession>
<accession>Q86UH5</accession>
<accession>Q9Y3J7</accession>
<gene>
    <name type="primary">CAMK1G</name>
    <name type="synonym">CLICK3</name>
    <name type="synonym">VWS1</name>
</gene>
<protein>
    <recommendedName>
        <fullName>Calcium/calmodulin-dependent protein kinase type 1G</fullName>
        <ecNumber>2.7.11.17</ecNumber>
    </recommendedName>
    <alternativeName>
        <fullName>CaM kinase I gamma</fullName>
        <shortName>CaM kinase IG</shortName>
        <shortName>CaM-KI gamma</shortName>
        <shortName>CaMKI gamma</shortName>
        <shortName>CaMKIG</shortName>
    </alternativeName>
    <alternativeName>
        <fullName>CaMK-like CREB kinase III</fullName>
        <shortName>CLICK III</shortName>
    </alternativeName>
</protein>
<comment type="function">
    <text evidence="1">Calcium/calmodulin-dependent protein kinase belonging to a proposed calcium-triggered signaling cascade. In vitro phosphorylates transcription factor CREB1 (By similarity).</text>
</comment>
<comment type="catalytic activity">
    <reaction>
        <text>L-seryl-[protein] + ATP = O-phospho-L-seryl-[protein] + ADP + H(+)</text>
        <dbReference type="Rhea" id="RHEA:17989"/>
        <dbReference type="Rhea" id="RHEA-COMP:9863"/>
        <dbReference type="Rhea" id="RHEA-COMP:11604"/>
        <dbReference type="ChEBI" id="CHEBI:15378"/>
        <dbReference type="ChEBI" id="CHEBI:29999"/>
        <dbReference type="ChEBI" id="CHEBI:30616"/>
        <dbReference type="ChEBI" id="CHEBI:83421"/>
        <dbReference type="ChEBI" id="CHEBI:456216"/>
        <dbReference type="EC" id="2.7.11.17"/>
    </reaction>
</comment>
<comment type="catalytic activity">
    <reaction>
        <text>L-threonyl-[protein] + ATP = O-phospho-L-threonyl-[protein] + ADP + H(+)</text>
        <dbReference type="Rhea" id="RHEA:46608"/>
        <dbReference type="Rhea" id="RHEA-COMP:11060"/>
        <dbReference type="Rhea" id="RHEA-COMP:11605"/>
        <dbReference type="ChEBI" id="CHEBI:15378"/>
        <dbReference type="ChEBI" id="CHEBI:30013"/>
        <dbReference type="ChEBI" id="CHEBI:30616"/>
        <dbReference type="ChEBI" id="CHEBI:61977"/>
        <dbReference type="ChEBI" id="CHEBI:456216"/>
        <dbReference type="EC" id="2.7.11.17"/>
    </reaction>
</comment>
<comment type="activity regulation">
    <text evidence="1">Activated by Ca(2+)/calmodulin. Binding of calmodulin is thought to result in a conformational change and leads to activation through phosphorylation by CAMKK1 (By similarity).</text>
</comment>
<comment type="interaction">
    <interactant intactId="EBI-3920838">
        <id>Q96NX5</id>
    </interactant>
    <interactant intactId="EBI-9641086">
        <id>P21333-2</id>
        <label>FLNA</label>
    </interactant>
    <organismsDiffer>false</organismsDiffer>
    <experiments>3</experiments>
</comment>
<comment type="interaction">
    <interactant intactId="EBI-3920838">
        <id>Q96NX5</id>
    </interactant>
    <interactant intactId="EBI-747754">
        <id>P28799</id>
        <label>GRN</label>
    </interactant>
    <organismsDiffer>false</organismsDiffer>
    <experiments>3</experiments>
</comment>
<comment type="interaction">
    <interactant intactId="EBI-3920838">
        <id>Q96NX5</id>
    </interactant>
    <interactant intactId="EBI-10975473">
        <id>O60333-2</id>
        <label>KIF1B</label>
    </interactant>
    <organismsDiffer>false</organismsDiffer>
    <experiments>3</experiments>
</comment>
<comment type="interaction">
    <interactant intactId="EBI-3920838">
        <id>Q96NX5</id>
    </interactant>
    <interactant intactId="EBI-10171774">
        <id>P60410</id>
        <label>KRTAP10-8</label>
    </interactant>
    <organismsDiffer>false</organismsDiffer>
    <experiments>3</experiments>
</comment>
<comment type="interaction">
    <interactant intactId="EBI-3920838">
        <id>Q96NX5</id>
    </interactant>
    <interactant intactId="EBI-1050743">
        <id>P31153</id>
        <label>MAT2A</label>
    </interactant>
    <organismsDiffer>false</organismsDiffer>
    <experiments>3</experiments>
</comment>
<comment type="interaction">
    <interactant intactId="EBI-3920838">
        <id>Q96NX5</id>
    </interactant>
    <interactant intactId="EBI-720609">
        <id>O76024</id>
        <label>WFS1</label>
    </interactant>
    <organismsDiffer>false</organismsDiffer>
    <experiments>3</experiments>
</comment>
<comment type="subcellular location">
    <subcellularLocation>
        <location evidence="1">Cytoplasm</location>
    </subcellularLocation>
    <subcellularLocation>
        <location evidence="1">Golgi apparatus membrane</location>
        <topology evidence="1">Peripheral membrane protein</topology>
    </subcellularLocation>
    <subcellularLocation>
        <location evidence="1">Cell membrane</location>
        <topology evidence="1">Peripheral membrane protein</topology>
    </subcellularLocation>
</comment>
<comment type="alternative products">
    <event type="alternative splicing"/>
    <isoform>
        <id>Q96NX5-1</id>
        <name>1</name>
        <sequence type="displayed"/>
    </isoform>
    <isoform>
        <id>Q96NX5-2</id>
        <name>2</name>
        <sequence type="described" ref="VSP_012138"/>
    </isoform>
</comment>
<comment type="tissue specificity">
    <text evidence="6">Mainly expressed in brain with small amounts in skeletal muscles, kidney, spleen and liver. Strongly expressed in forebrain neocortex, striatum and limbic system.</text>
</comment>
<comment type="domain">
    <text evidence="1">The autoinhibitory domain overlaps with the calmodulin binding region and interacts in the inactive folded state with the catalytic domain as a pseudosubstrate.</text>
</comment>
<comment type="PTM">
    <text evidence="1">May be prenylated on Cys-473.</text>
</comment>
<comment type="similarity">
    <text evidence="9">Belongs to the protein kinase superfamily. CAMK Ser/Thr protein kinase family. CaMK subfamily.</text>
</comment>
<comment type="sequence caution" evidence="9">
    <conflict type="erroneous initiation">
        <sequence resource="EMBL-CDS" id="CAB41259"/>
    </conflict>
</comment>
<name>KCC1G_HUMAN</name>
<dbReference type="EC" id="2.7.11.17"/>
<dbReference type="EMBL" id="AF428261">
    <property type="protein sequence ID" value="AAL28100.1"/>
    <property type="molecule type" value="mRNA"/>
</dbReference>
<dbReference type="EMBL" id="AY212935">
    <property type="protein sequence ID" value="AAP29964.1"/>
    <property type="molecule type" value="mRNA"/>
</dbReference>
<dbReference type="EMBL" id="AL049688">
    <property type="protein sequence ID" value="CAB41259.1"/>
    <property type="status" value="ALT_INIT"/>
    <property type="molecule type" value="mRNA"/>
</dbReference>
<dbReference type="EMBL" id="AL023754">
    <property type="status" value="NOT_ANNOTATED_CDS"/>
    <property type="molecule type" value="Genomic_DNA"/>
</dbReference>
<dbReference type="EMBL" id="BC032787">
    <property type="protein sequence ID" value="AAH32787.1"/>
    <property type="molecule type" value="mRNA"/>
</dbReference>
<dbReference type="CCDS" id="CCDS1486.1">
    <molecule id="Q96NX5-1"/>
</dbReference>
<dbReference type="RefSeq" id="NP_065172.1">
    <molecule id="Q96NX5-1"/>
    <property type="nucleotide sequence ID" value="NM_020439.3"/>
</dbReference>
<dbReference type="RefSeq" id="XP_016857355.1">
    <molecule id="Q96NX5-1"/>
    <property type="nucleotide sequence ID" value="XM_017001866.3"/>
</dbReference>
<dbReference type="RefSeq" id="XP_054193773.1">
    <molecule id="Q96NX5-1"/>
    <property type="nucleotide sequence ID" value="XM_054337798.1"/>
</dbReference>
<dbReference type="PDB" id="2JAM">
    <property type="method" value="X-ray"/>
    <property type="resolution" value="1.70 A"/>
    <property type="chains" value="A/B=18-316"/>
</dbReference>
<dbReference type="PDBsum" id="2JAM"/>
<dbReference type="SMR" id="Q96NX5"/>
<dbReference type="BioGRID" id="121424">
    <property type="interactions" value="17"/>
</dbReference>
<dbReference type="FunCoup" id="Q96NX5">
    <property type="interactions" value="891"/>
</dbReference>
<dbReference type="IntAct" id="Q96NX5">
    <property type="interactions" value="12"/>
</dbReference>
<dbReference type="STRING" id="9606.ENSP00000009105"/>
<dbReference type="BindingDB" id="Q96NX5"/>
<dbReference type="ChEMBL" id="CHEMBL5258"/>
<dbReference type="DrugBank" id="DB12010">
    <property type="generic name" value="Fostamatinib"/>
</dbReference>
<dbReference type="DrugBank" id="DB08009">
    <property type="generic name" value="SU-11652"/>
</dbReference>
<dbReference type="DrugCentral" id="Q96NX5"/>
<dbReference type="iPTMnet" id="Q96NX5"/>
<dbReference type="PhosphoSitePlus" id="Q96NX5"/>
<dbReference type="BioMuta" id="CAMK1G"/>
<dbReference type="DMDM" id="73620970"/>
<dbReference type="jPOST" id="Q96NX5"/>
<dbReference type="MassIVE" id="Q96NX5"/>
<dbReference type="PaxDb" id="9606-ENSP00000009105"/>
<dbReference type="PeptideAtlas" id="Q96NX5"/>
<dbReference type="ProteomicsDB" id="77570">
    <molecule id="Q96NX5-1"/>
</dbReference>
<dbReference type="ProteomicsDB" id="77571">
    <molecule id="Q96NX5-2"/>
</dbReference>
<dbReference type="Antibodypedia" id="20698">
    <property type="antibodies" value="296 antibodies from 30 providers"/>
</dbReference>
<dbReference type="DNASU" id="57172"/>
<dbReference type="Ensembl" id="ENST00000009105.5">
    <molecule id="Q96NX5-1"/>
    <property type="protein sequence ID" value="ENSP00000009105.1"/>
    <property type="gene ID" value="ENSG00000008118.10"/>
</dbReference>
<dbReference type="Ensembl" id="ENST00000361322.3">
    <molecule id="Q96NX5-1"/>
    <property type="protein sequence ID" value="ENSP00000354861.2"/>
    <property type="gene ID" value="ENSG00000008118.10"/>
</dbReference>
<dbReference type="GeneID" id="57172"/>
<dbReference type="KEGG" id="hsa:57172"/>
<dbReference type="MANE-Select" id="ENST00000361322.3">
    <property type="protein sequence ID" value="ENSP00000354861.2"/>
    <property type="RefSeq nucleotide sequence ID" value="NM_020439.3"/>
    <property type="RefSeq protein sequence ID" value="NP_065172.1"/>
</dbReference>
<dbReference type="UCSC" id="uc001hhd.4">
    <molecule id="Q96NX5-1"/>
    <property type="organism name" value="human"/>
</dbReference>
<dbReference type="AGR" id="HGNC:14585"/>
<dbReference type="CTD" id="57172"/>
<dbReference type="DisGeNET" id="57172"/>
<dbReference type="GeneCards" id="CAMK1G"/>
<dbReference type="HGNC" id="HGNC:14585">
    <property type="gene designation" value="CAMK1G"/>
</dbReference>
<dbReference type="HPA" id="ENSG00000008118">
    <property type="expression patterns" value="Tissue enhanced (brain, ovary)"/>
</dbReference>
<dbReference type="MIM" id="614994">
    <property type="type" value="gene"/>
</dbReference>
<dbReference type="neXtProt" id="NX_Q96NX5"/>
<dbReference type="OpenTargets" id="ENSG00000008118"/>
<dbReference type="PharmGKB" id="PA26049"/>
<dbReference type="VEuPathDB" id="HostDB:ENSG00000008118"/>
<dbReference type="eggNOG" id="KOG0032">
    <property type="taxonomic scope" value="Eukaryota"/>
</dbReference>
<dbReference type="GeneTree" id="ENSGT00940000156872"/>
<dbReference type="HOGENOM" id="CLU_000288_63_0_1"/>
<dbReference type="InParanoid" id="Q96NX5"/>
<dbReference type="OMA" id="YAWKKNT"/>
<dbReference type="OrthoDB" id="40902at2759"/>
<dbReference type="PAN-GO" id="Q96NX5">
    <property type="GO annotations" value="4 GO annotations based on evolutionary models"/>
</dbReference>
<dbReference type="PhylomeDB" id="Q96NX5"/>
<dbReference type="TreeFam" id="TF314166"/>
<dbReference type="BRENDA" id="2.7.11.17">
    <property type="organism ID" value="2681"/>
</dbReference>
<dbReference type="PathwayCommons" id="Q96NX5"/>
<dbReference type="SignaLink" id="Q96NX5"/>
<dbReference type="SIGNOR" id="Q96NX5"/>
<dbReference type="BioGRID-ORCS" id="57172">
    <property type="hits" value="12 hits in 1179 CRISPR screens"/>
</dbReference>
<dbReference type="EvolutionaryTrace" id="Q96NX5"/>
<dbReference type="GenomeRNAi" id="57172"/>
<dbReference type="Pharos" id="Q96NX5">
    <property type="development level" value="Tchem"/>
</dbReference>
<dbReference type="PRO" id="PR:Q96NX5"/>
<dbReference type="Proteomes" id="UP000005640">
    <property type="component" value="Chromosome 1"/>
</dbReference>
<dbReference type="RNAct" id="Q96NX5">
    <property type="molecule type" value="protein"/>
</dbReference>
<dbReference type="Bgee" id="ENSG00000008118">
    <property type="expression patterns" value="Expressed in frontal pole and 132 other cell types or tissues"/>
</dbReference>
<dbReference type="ExpressionAtlas" id="Q96NX5">
    <property type="expression patterns" value="baseline and differential"/>
</dbReference>
<dbReference type="GO" id="GO:0005954">
    <property type="term" value="C:calcium- and calmodulin-dependent protein kinase complex"/>
    <property type="evidence" value="ECO:0007669"/>
    <property type="project" value="Ensembl"/>
</dbReference>
<dbReference type="GO" id="GO:0005737">
    <property type="term" value="C:cytoplasm"/>
    <property type="evidence" value="ECO:0000318"/>
    <property type="project" value="GO_Central"/>
</dbReference>
<dbReference type="GO" id="GO:0000139">
    <property type="term" value="C:Golgi membrane"/>
    <property type="evidence" value="ECO:0007669"/>
    <property type="project" value="UniProtKB-SubCell"/>
</dbReference>
<dbReference type="GO" id="GO:0005886">
    <property type="term" value="C:plasma membrane"/>
    <property type="evidence" value="ECO:0007669"/>
    <property type="project" value="UniProtKB-SubCell"/>
</dbReference>
<dbReference type="GO" id="GO:0005524">
    <property type="term" value="F:ATP binding"/>
    <property type="evidence" value="ECO:0007669"/>
    <property type="project" value="UniProtKB-KW"/>
</dbReference>
<dbReference type="GO" id="GO:0004683">
    <property type="term" value="F:calcium/calmodulin-dependent protein kinase activity"/>
    <property type="evidence" value="ECO:0000318"/>
    <property type="project" value="GO_Central"/>
</dbReference>
<dbReference type="GO" id="GO:0005516">
    <property type="term" value="F:calmodulin binding"/>
    <property type="evidence" value="ECO:0000318"/>
    <property type="project" value="GO_Central"/>
</dbReference>
<dbReference type="GO" id="GO:0106310">
    <property type="term" value="F:protein serine kinase activity"/>
    <property type="evidence" value="ECO:0007669"/>
    <property type="project" value="RHEA"/>
</dbReference>
<dbReference type="GO" id="GO:0007165">
    <property type="term" value="P:signal transduction"/>
    <property type="evidence" value="ECO:0000318"/>
    <property type="project" value="GO_Central"/>
</dbReference>
<dbReference type="CDD" id="cd14166">
    <property type="entry name" value="STKc_CaMKI_gamma"/>
    <property type="match status" value="1"/>
</dbReference>
<dbReference type="FunFam" id="1.10.510.10:FF:000026">
    <property type="entry name" value="Calcium/calmodulin-dependent protein kinase type 1"/>
    <property type="match status" value="1"/>
</dbReference>
<dbReference type="FunFam" id="3.30.200.20:FF:000331">
    <property type="entry name" value="Calcium/calmodulin-dependent protein kinase type 1G"/>
    <property type="match status" value="1"/>
</dbReference>
<dbReference type="Gene3D" id="3.30.200.20">
    <property type="entry name" value="Phosphorylase Kinase, domain 1"/>
    <property type="match status" value="1"/>
</dbReference>
<dbReference type="Gene3D" id="1.10.510.10">
    <property type="entry name" value="Transferase(Phosphotransferase) domain 1"/>
    <property type="match status" value="1"/>
</dbReference>
<dbReference type="InterPro" id="IPR011009">
    <property type="entry name" value="Kinase-like_dom_sf"/>
</dbReference>
<dbReference type="InterPro" id="IPR000719">
    <property type="entry name" value="Prot_kinase_dom"/>
</dbReference>
<dbReference type="InterPro" id="IPR017441">
    <property type="entry name" value="Protein_kinase_ATP_BS"/>
</dbReference>
<dbReference type="InterPro" id="IPR008271">
    <property type="entry name" value="Ser/Thr_kinase_AS"/>
</dbReference>
<dbReference type="PANTHER" id="PTHR24347">
    <property type="entry name" value="SERINE/THREONINE-PROTEIN KINASE"/>
    <property type="match status" value="1"/>
</dbReference>
<dbReference type="Pfam" id="PF00069">
    <property type="entry name" value="Pkinase"/>
    <property type="match status" value="1"/>
</dbReference>
<dbReference type="SMART" id="SM00220">
    <property type="entry name" value="S_TKc"/>
    <property type="match status" value="1"/>
</dbReference>
<dbReference type="SUPFAM" id="SSF56112">
    <property type="entry name" value="Protein kinase-like (PK-like)"/>
    <property type="match status" value="1"/>
</dbReference>
<dbReference type="PROSITE" id="PS00107">
    <property type="entry name" value="PROTEIN_KINASE_ATP"/>
    <property type="match status" value="1"/>
</dbReference>
<dbReference type="PROSITE" id="PS50011">
    <property type="entry name" value="PROTEIN_KINASE_DOM"/>
    <property type="match status" value="1"/>
</dbReference>
<dbReference type="PROSITE" id="PS00108">
    <property type="entry name" value="PROTEIN_KINASE_ST"/>
    <property type="match status" value="1"/>
</dbReference>
<sequence>MGRKEEDDCSSWKKQTTNIRKTFIFMEVLGSGAFSEVFLVKQRLTGKLFALKCIKKSPAFRDSSLENEIAVLKKIKHENIVTLEDIYESTTHYYLVMQLVSGGELFDRILERGVYTEKDASLVIQQVLSAVKYLHENGIVHRDLKPENLLYLTPEENSKIMITDFGLSKMEQNGIMSTACGTPGYVAPEVLAQKPYSKAVDCWSIGVITYILLCGYPPFYEETESKLFEKIKEGYYEFESPFWDDISESAKDFICHLLEKDPNERYTCEKALSHPWIDGNTALHRDIYPSVSLQIQKNFAKSKWRQAFNAAAVVHHMRKLHMNLHSPGVRPEVENRPPETQASETSRPSSPEITITEAPVLDHSVALPALTQLPCQHGRRPTAPGGRSLNCLVNGSLHISSSLVPMHQGSLAAGPCGCCSSCLNIGSKGKSSYCSEPTLLKKANKKQNFKSEVMVPVKASGSSHCRAGQTGVCLIM</sequence>
<organism>
    <name type="scientific">Homo sapiens</name>
    <name type="common">Human</name>
    <dbReference type="NCBI Taxonomy" id="9606"/>
    <lineage>
        <taxon>Eukaryota</taxon>
        <taxon>Metazoa</taxon>
        <taxon>Chordata</taxon>
        <taxon>Craniata</taxon>
        <taxon>Vertebrata</taxon>
        <taxon>Euteleostomi</taxon>
        <taxon>Mammalia</taxon>
        <taxon>Eutheria</taxon>
        <taxon>Euarchontoglires</taxon>
        <taxon>Primates</taxon>
        <taxon>Haplorrhini</taxon>
        <taxon>Catarrhini</taxon>
        <taxon>Hominidae</taxon>
        <taxon>Homo</taxon>
    </lineage>
</organism>
<reference key="1">
    <citation type="journal article" date="2000" name="Genome Res.">
        <title>A preliminary gene map for the Van der Woude syndrome critical region derived from 900 kb of genomic sequence at 1q32-q41.</title>
        <authorList>
            <person name="Schutte B.C."/>
            <person name="Bjork B.C."/>
            <person name="Coppage K.B."/>
            <person name="Malik M.I."/>
            <person name="Gregory S.G."/>
            <person name="Scott D.J."/>
            <person name="Brentzell L.M."/>
            <person name="Watanabe Y."/>
            <person name="Dixon M.J."/>
            <person name="Murray J.C."/>
        </authorList>
    </citation>
    <scope>NUCLEOTIDE SEQUENCE [MRNA] (ISOFORM 1)</scope>
    <scope>VARIANT ILE-329</scope>
</reference>
<reference key="2">
    <citation type="journal article" date="2003" name="J. Biol. Chem.">
        <title>Molecular cloning and characterization of CLICK-III/CaMKIgamma, a novel membrane-anchored neuronal Ca2+/calmodulin-dependent protein kinase (CaMK).</title>
        <authorList>
            <person name="Takemoto-Kimura S."/>
            <person name="Terai H."/>
            <person name="Takamoto M."/>
            <person name="Ohmae S."/>
            <person name="Kikumura S."/>
            <person name="Segi E."/>
            <person name="Arakawa Y."/>
            <person name="Furuyashiki T."/>
            <person name="Narumiya S."/>
            <person name="Bito H."/>
        </authorList>
    </citation>
    <scope>NUCLEOTIDE SEQUENCE [MRNA] (ISOFORM 2)</scope>
    <scope>TISSUE SPECIFICITY</scope>
</reference>
<reference key="3">
    <citation type="submission" date="1999-04" db="EMBL/GenBank/DDBJ databases">
        <authorList>
            <person name="Rhodes S."/>
        </authorList>
    </citation>
    <scope>NUCLEOTIDE SEQUENCE [LARGE SCALE MRNA] (ISOFORM 1)</scope>
</reference>
<reference key="4">
    <citation type="journal article" date="2006" name="Nature">
        <title>The DNA sequence and biological annotation of human chromosome 1.</title>
        <authorList>
            <person name="Gregory S.G."/>
            <person name="Barlow K.F."/>
            <person name="McLay K.E."/>
            <person name="Kaul R."/>
            <person name="Swarbreck D."/>
            <person name="Dunham A."/>
            <person name="Scott C.E."/>
            <person name="Howe K.L."/>
            <person name="Woodfine K."/>
            <person name="Spencer C.C.A."/>
            <person name="Jones M.C."/>
            <person name="Gillson C."/>
            <person name="Searle S."/>
            <person name="Zhou Y."/>
            <person name="Kokocinski F."/>
            <person name="McDonald L."/>
            <person name="Evans R."/>
            <person name="Phillips K."/>
            <person name="Atkinson A."/>
            <person name="Cooper R."/>
            <person name="Jones C."/>
            <person name="Hall R.E."/>
            <person name="Andrews T.D."/>
            <person name="Lloyd C."/>
            <person name="Ainscough R."/>
            <person name="Almeida J.P."/>
            <person name="Ambrose K.D."/>
            <person name="Anderson F."/>
            <person name="Andrew R.W."/>
            <person name="Ashwell R.I.S."/>
            <person name="Aubin K."/>
            <person name="Babbage A.K."/>
            <person name="Bagguley C.L."/>
            <person name="Bailey J."/>
            <person name="Beasley H."/>
            <person name="Bethel G."/>
            <person name="Bird C.P."/>
            <person name="Bray-Allen S."/>
            <person name="Brown J.Y."/>
            <person name="Brown A.J."/>
            <person name="Buckley D."/>
            <person name="Burton J."/>
            <person name="Bye J."/>
            <person name="Carder C."/>
            <person name="Chapman J.C."/>
            <person name="Clark S.Y."/>
            <person name="Clarke G."/>
            <person name="Clee C."/>
            <person name="Cobley V."/>
            <person name="Collier R.E."/>
            <person name="Corby N."/>
            <person name="Coville G.J."/>
            <person name="Davies J."/>
            <person name="Deadman R."/>
            <person name="Dunn M."/>
            <person name="Earthrowl M."/>
            <person name="Ellington A.G."/>
            <person name="Errington H."/>
            <person name="Frankish A."/>
            <person name="Frankland J."/>
            <person name="French L."/>
            <person name="Garner P."/>
            <person name="Garnett J."/>
            <person name="Gay L."/>
            <person name="Ghori M.R.J."/>
            <person name="Gibson R."/>
            <person name="Gilby L.M."/>
            <person name="Gillett W."/>
            <person name="Glithero R.J."/>
            <person name="Grafham D.V."/>
            <person name="Griffiths C."/>
            <person name="Griffiths-Jones S."/>
            <person name="Grocock R."/>
            <person name="Hammond S."/>
            <person name="Harrison E.S.I."/>
            <person name="Hart E."/>
            <person name="Haugen E."/>
            <person name="Heath P.D."/>
            <person name="Holmes S."/>
            <person name="Holt K."/>
            <person name="Howden P.J."/>
            <person name="Hunt A.R."/>
            <person name="Hunt S.E."/>
            <person name="Hunter G."/>
            <person name="Isherwood J."/>
            <person name="James R."/>
            <person name="Johnson C."/>
            <person name="Johnson D."/>
            <person name="Joy A."/>
            <person name="Kay M."/>
            <person name="Kershaw J.K."/>
            <person name="Kibukawa M."/>
            <person name="Kimberley A.M."/>
            <person name="King A."/>
            <person name="Knights A.J."/>
            <person name="Lad H."/>
            <person name="Laird G."/>
            <person name="Lawlor S."/>
            <person name="Leongamornlert D.A."/>
            <person name="Lloyd D.M."/>
            <person name="Loveland J."/>
            <person name="Lovell J."/>
            <person name="Lush M.J."/>
            <person name="Lyne R."/>
            <person name="Martin S."/>
            <person name="Mashreghi-Mohammadi M."/>
            <person name="Matthews L."/>
            <person name="Matthews N.S.W."/>
            <person name="McLaren S."/>
            <person name="Milne S."/>
            <person name="Mistry S."/>
            <person name="Moore M.J.F."/>
            <person name="Nickerson T."/>
            <person name="O'Dell C.N."/>
            <person name="Oliver K."/>
            <person name="Palmeiri A."/>
            <person name="Palmer S.A."/>
            <person name="Parker A."/>
            <person name="Patel D."/>
            <person name="Pearce A.V."/>
            <person name="Peck A.I."/>
            <person name="Pelan S."/>
            <person name="Phelps K."/>
            <person name="Phillimore B.J."/>
            <person name="Plumb R."/>
            <person name="Rajan J."/>
            <person name="Raymond C."/>
            <person name="Rouse G."/>
            <person name="Saenphimmachak C."/>
            <person name="Sehra H.K."/>
            <person name="Sheridan E."/>
            <person name="Shownkeen R."/>
            <person name="Sims S."/>
            <person name="Skuce C.D."/>
            <person name="Smith M."/>
            <person name="Steward C."/>
            <person name="Subramanian S."/>
            <person name="Sycamore N."/>
            <person name="Tracey A."/>
            <person name="Tromans A."/>
            <person name="Van Helmond Z."/>
            <person name="Wall M."/>
            <person name="Wallis J.M."/>
            <person name="White S."/>
            <person name="Whitehead S.L."/>
            <person name="Wilkinson J.E."/>
            <person name="Willey D.L."/>
            <person name="Williams H."/>
            <person name="Wilming L."/>
            <person name="Wray P.W."/>
            <person name="Wu Z."/>
            <person name="Coulson A."/>
            <person name="Vaudin M."/>
            <person name="Sulston J.E."/>
            <person name="Durbin R.M."/>
            <person name="Hubbard T."/>
            <person name="Wooster R."/>
            <person name="Dunham I."/>
            <person name="Carter N.P."/>
            <person name="McVean G."/>
            <person name="Ross M.T."/>
            <person name="Harrow J."/>
            <person name="Olson M.V."/>
            <person name="Beck S."/>
            <person name="Rogers J."/>
            <person name="Bentley D.R."/>
        </authorList>
    </citation>
    <scope>NUCLEOTIDE SEQUENCE [LARGE SCALE GENOMIC DNA]</scope>
</reference>
<reference key="5">
    <citation type="journal article" date="2004" name="Genome Res.">
        <title>The status, quality, and expansion of the NIH full-length cDNA project: the Mammalian Gene Collection (MGC).</title>
        <authorList>
            <consortium name="The MGC Project Team"/>
        </authorList>
    </citation>
    <scope>NUCLEOTIDE SEQUENCE [LARGE SCALE MRNA] (ISOFORM 1)</scope>
</reference>
<reference key="6">
    <citation type="journal article" date="2007" name="Nature">
        <title>Patterns of somatic mutation in human cancer genomes.</title>
        <authorList>
            <person name="Greenman C."/>
            <person name="Stephens P."/>
            <person name="Smith R."/>
            <person name="Dalgliesh G.L."/>
            <person name="Hunter C."/>
            <person name="Bignell G."/>
            <person name="Davies H."/>
            <person name="Teague J."/>
            <person name="Butler A."/>
            <person name="Stevens C."/>
            <person name="Edkins S."/>
            <person name="O'Meara S."/>
            <person name="Vastrik I."/>
            <person name="Schmidt E.E."/>
            <person name="Avis T."/>
            <person name="Barthorpe S."/>
            <person name="Bhamra G."/>
            <person name="Buck G."/>
            <person name="Choudhury B."/>
            <person name="Clements J."/>
            <person name="Cole J."/>
            <person name="Dicks E."/>
            <person name="Forbes S."/>
            <person name="Gray K."/>
            <person name="Halliday K."/>
            <person name="Harrison R."/>
            <person name="Hills K."/>
            <person name="Hinton J."/>
            <person name="Jenkinson A."/>
            <person name="Jones D."/>
            <person name="Menzies A."/>
            <person name="Mironenko T."/>
            <person name="Perry J."/>
            <person name="Raine K."/>
            <person name="Richardson D."/>
            <person name="Shepherd R."/>
            <person name="Small A."/>
            <person name="Tofts C."/>
            <person name="Varian J."/>
            <person name="Webb T."/>
            <person name="West S."/>
            <person name="Widaa S."/>
            <person name="Yates A."/>
            <person name="Cahill D.P."/>
            <person name="Louis D.N."/>
            <person name="Goldstraw P."/>
            <person name="Nicholson A.G."/>
            <person name="Brasseur F."/>
            <person name="Looijenga L."/>
            <person name="Weber B.L."/>
            <person name="Chiew Y.-E."/>
            <person name="DeFazio A."/>
            <person name="Greaves M.F."/>
            <person name="Green A.R."/>
            <person name="Campbell P."/>
            <person name="Birney E."/>
            <person name="Easton D.F."/>
            <person name="Chenevix-Trench G."/>
            <person name="Tan M.-H."/>
            <person name="Khoo S.K."/>
            <person name="Teh B.T."/>
            <person name="Yuen S.T."/>
            <person name="Leung S.Y."/>
            <person name="Wooster R."/>
            <person name="Futreal P.A."/>
            <person name="Stratton M.R."/>
        </authorList>
    </citation>
    <scope>VARIANTS [LARGE SCALE ANALYSIS] GLN-259; ILE-329 AND THR-443</scope>
</reference>
<feature type="chain" id="PRO_0000086084" description="Calcium/calmodulin-dependent protein kinase type 1G">
    <location>
        <begin position="1"/>
        <end position="476"/>
    </location>
</feature>
<feature type="domain" description="Protein kinase" evidence="2">
    <location>
        <begin position="23"/>
        <end position="277"/>
    </location>
</feature>
<feature type="region of interest" description="Autoinhibitory domain" evidence="1">
    <location>
        <begin position="277"/>
        <end position="317"/>
    </location>
</feature>
<feature type="region of interest" description="Calmodulin-binding" evidence="1">
    <location>
        <begin position="297"/>
        <end position="318"/>
    </location>
</feature>
<feature type="region of interest" description="Disordered" evidence="4">
    <location>
        <begin position="325"/>
        <end position="352"/>
    </location>
</feature>
<feature type="compositionally biased region" description="Polar residues" evidence="4">
    <location>
        <begin position="338"/>
        <end position="352"/>
    </location>
</feature>
<feature type="active site" description="Proton acceptor" evidence="2 3">
    <location>
        <position position="143"/>
    </location>
</feature>
<feature type="binding site" evidence="2">
    <location>
        <begin position="29"/>
        <end position="37"/>
    </location>
    <ligand>
        <name>ATP</name>
        <dbReference type="ChEBI" id="CHEBI:30616"/>
    </ligand>
</feature>
<feature type="binding site" evidence="2">
    <location>
        <position position="52"/>
    </location>
    <ligand>
        <name>ATP</name>
        <dbReference type="ChEBI" id="CHEBI:30616"/>
    </ligand>
</feature>
<feature type="splice variant" id="VSP_012138" description="In isoform 2." evidence="8">
    <original>NFKSEVMVPVKASGSSHCRAGQTGVCLIM</original>
    <variation>YVFLAKDGAPAWV</variation>
    <location>
        <begin position="448"/>
        <end position="476"/>
    </location>
</feature>
<feature type="sequence variant" id="VAR_040600" description="In dbSNP:rs35561962." evidence="7">
    <original>E</original>
    <variation>Q</variation>
    <location>
        <position position="259"/>
    </location>
</feature>
<feature type="sequence variant" id="VAR_020530" description="In dbSNP:rs11119315." evidence="5 7">
    <original>V</original>
    <variation>I</variation>
    <location>
        <position position="329"/>
    </location>
</feature>
<feature type="sequence variant" id="VAR_040601" description="In a breast infiltrating ductal carcinoma sample; somatic mutation; dbSNP:rs1228276529." evidence="7">
    <original>A</original>
    <variation>T</variation>
    <location>
        <position position="443"/>
    </location>
</feature>
<feature type="sequence conflict" description="In Ref. 1; AAL28100." evidence="9" ref="1">
    <original>S</original>
    <variation>N</variation>
    <location>
        <position position="427"/>
    </location>
</feature>
<feature type="helix" evidence="10">
    <location>
        <begin position="19"/>
        <end position="22"/>
    </location>
</feature>
<feature type="strand" evidence="10">
    <location>
        <begin position="23"/>
        <end position="31"/>
    </location>
</feature>
<feature type="strand" evidence="10">
    <location>
        <begin position="33"/>
        <end position="42"/>
    </location>
</feature>
<feature type="turn" evidence="10">
    <location>
        <begin position="43"/>
        <end position="45"/>
    </location>
</feature>
<feature type="strand" evidence="10">
    <location>
        <begin position="48"/>
        <end position="55"/>
    </location>
</feature>
<feature type="helix" evidence="10">
    <location>
        <begin position="64"/>
        <end position="74"/>
    </location>
</feature>
<feature type="strand" evidence="10">
    <location>
        <begin position="83"/>
        <end position="88"/>
    </location>
</feature>
<feature type="strand" evidence="10">
    <location>
        <begin position="90"/>
        <end position="97"/>
    </location>
</feature>
<feature type="helix" evidence="10">
    <location>
        <begin position="105"/>
        <end position="112"/>
    </location>
</feature>
<feature type="helix" evidence="10">
    <location>
        <begin position="117"/>
        <end position="136"/>
    </location>
</feature>
<feature type="helix" evidence="10">
    <location>
        <begin position="146"/>
        <end position="148"/>
    </location>
</feature>
<feature type="strand" evidence="10">
    <location>
        <begin position="150"/>
        <end position="155"/>
    </location>
</feature>
<feature type="strand" evidence="10">
    <location>
        <begin position="160"/>
        <end position="162"/>
    </location>
</feature>
<feature type="helix" evidence="10">
    <location>
        <begin position="177"/>
        <end position="180"/>
    </location>
</feature>
<feature type="turn" evidence="10">
    <location>
        <begin position="188"/>
        <end position="190"/>
    </location>
</feature>
<feature type="strand" evidence="10">
    <location>
        <begin position="191"/>
        <end position="193"/>
    </location>
</feature>
<feature type="helix" evidence="10">
    <location>
        <begin position="198"/>
        <end position="214"/>
    </location>
</feature>
<feature type="turn" evidence="10">
    <location>
        <begin position="218"/>
        <end position="221"/>
    </location>
</feature>
<feature type="helix" evidence="10">
    <location>
        <begin position="224"/>
        <end position="233"/>
    </location>
</feature>
<feature type="turn" evidence="10">
    <location>
        <begin position="240"/>
        <end position="245"/>
    </location>
</feature>
<feature type="helix" evidence="10">
    <location>
        <begin position="248"/>
        <end position="258"/>
    </location>
</feature>
<feature type="turn" evidence="10">
    <location>
        <begin position="262"/>
        <end position="264"/>
    </location>
</feature>
<feature type="helix" evidence="10">
    <location>
        <begin position="268"/>
        <end position="272"/>
    </location>
</feature>
<feature type="helix" evidence="10">
    <location>
        <begin position="275"/>
        <end position="278"/>
    </location>
</feature>
<feature type="helix" evidence="10">
    <location>
        <begin position="288"/>
        <end position="298"/>
    </location>
</feature>
<proteinExistence type="evidence at protein level"/>
<keyword id="KW-0002">3D-structure</keyword>
<keyword id="KW-0021">Allosteric enzyme</keyword>
<keyword id="KW-0025">Alternative splicing</keyword>
<keyword id="KW-0067">ATP-binding</keyword>
<keyword id="KW-0112">Calmodulin-binding</keyword>
<keyword id="KW-1003">Cell membrane</keyword>
<keyword id="KW-0963">Cytoplasm</keyword>
<keyword id="KW-0333">Golgi apparatus</keyword>
<keyword id="KW-0418">Kinase</keyword>
<keyword id="KW-0449">Lipoprotein</keyword>
<keyword id="KW-0472">Membrane</keyword>
<keyword id="KW-0547">Nucleotide-binding</keyword>
<keyword id="KW-0636">Prenylation</keyword>
<keyword id="KW-1267">Proteomics identification</keyword>
<keyword id="KW-1185">Reference proteome</keyword>
<keyword id="KW-0723">Serine/threonine-protein kinase</keyword>
<keyword id="KW-0808">Transferase</keyword>
<evidence type="ECO:0000250" key="1"/>
<evidence type="ECO:0000255" key="2">
    <source>
        <dbReference type="PROSITE-ProRule" id="PRU00159"/>
    </source>
</evidence>
<evidence type="ECO:0000255" key="3">
    <source>
        <dbReference type="PROSITE-ProRule" id="PRU10027"/>
    </source>
</evidence>
<evidence type="ECO:0000256" key="4">
    <source>
        <dbReference type="SAM" id="MobiDB-lite"/>
    </source>
</evidence>
<evidence type="ECO:0000269" key="5">
    <source>
    </source>
</evidence>
<evidence type="ECO:0000269" key="6">
    <source>
    </source>
</evidence>
<evidence type="ECO:0000269" key="7">
    <source>
    </source>
</evidence>
<evidence type="ECO:0000303" key="8">
    <source>
    </source>
</evidence>
<evidence type="ECO:0000305" key="9"/>
<evidence type="ECO:0007829" key="10">
    <source>
        <dbReference type="PDB" id="2JAM"/>
    </source>
</evidence>